<comment type="similarity">
    <text evidence="1">Belongs to the UPF0349 family.</text>
</comment>
<dbReference type="EMBL" id="CP000813">
    <property type="protein sequence ID" value="ABV63534.1"/>
    <property type="molecule type" value="Genomic_DNA"/>
</dbReference>
<dbReference type="RefSeq" id="WP_003213414.1">
    <property type="nucleotide sequence ID" value="NZ_VEIS01000008.1"/>
</dbReference>
<dbReference type="SMR" id="A8FH17"/>
<dbReference type="STRING" id="315750.BPUM_2879"/>
<dbReference type="GeneID" id="5622167"/>
<dbReference type="KEGG" id="bpu:BPUM_2879"/>
<dbReference type="eggNOG" id="COG4844">
    <property type="taxonomic scope" value="Bacteria"/>
</dbReference>
<dbReference type="HOGENOM" id="CLU_182025_0_0_9"/>
<dbReference type="OrthoDB" id="1684419at2"/>
<dbReference type="Proteomes" id="UP000001355">
    <property type="component" value="Chromosome"/>
</dbReference>
<dbReference type="HAMAP" id="MF_01542">
    <property type="entry name" value="UPF0349"/>
    <property type="match status" value="1"/>
</dbReference>
<dbReference type="InterPro" id="IPR009910">
    <property type="entry name" value="DUF1450"/>
</dbReference>
<dbReference type="InterPro" id="IPR022916">
    <property type="entry name" value="UPF0349"/>
</dbReference>
<dbReference type="NCBIfam" id="NF010190">
    <property type="entry name" value="PRK13669.1"/>
    <property type="match status" value="1"/>
</dbReference>
<dbReference type="Pfam" id="PF07293">
    <property type="entry name" value="DUF1450"/>
    <property type="match status" value="1"/>
</dbReference>
<gene>
    <name type="ordered locus">BPUM_2879</name>
</gene>
<proteinExistence type="inferred from homology"/>
<reference key="1">
    <citation type="journal article" date="2007" name="PLoS ONE">
        <title>Paradoxical DNA repair and peroxide resistance gene conservation in Bacillus pumilus SAFR-032.</title>
        <authorList>
            <person name="Gioia J."/>
            <person name="Yerrapragada S."/>
            <person name="Qin X."/>
            <person name="Jiang H."/>
            <person name="Igboeli O.C."/>
            <person name="Muzny D."/>
            <person name="Dugan-Rocha S."/>
            <person name="Ding Y."/>
            <person name="Hawes A."/>
            <person name="Liu W."/>
            <person name="Perez L."/>
            <person name="Kovar C."/>
            <person name="Dinh H."/>
            <person name="Lee S."/>
            <person name="Nazareth L."/>
            <person name="Blyth P."/>
            <person name="Holder M."/>
            <person name="Buhay C."/>
            <person name="Tirumalai M.R."/>
            <person name="Liu Y."/>
            <person name="Dasgupta I."/>
            <person name="Bokhetache L."/>
            <person name="Fujita M."/>
            <person name="Karouia F."/>
            <person name="Eswara Moorthy P."/>
            <person name="Siefert J."/>
            <person name="Uzman A."/>
            <person name="Buzumbo P."/>
            <person name="Verma A."/>
            <person name="Zwiya H."/>
            <person name="McWilliams B.D."/>
            <person name="Olowu A."/>
            <person name="Clinkenbeard K.D."/>
            <person name="Newcombe D."/>
            <person name="Golebiewski L."/>
            <person name="Petrosino J.F."/>
            <person name="Nicholson W.L."/>
            <person name="Fox G.E."/>
            <person name="Venkateswaran K."/>
            <person name="Highlander S.K."/>
            <person name="Weinstock G.M."/>
        </authorList>
    </citation>
    <scope>NUCLEOTIDE SEQUENCE [LARGE SCALE GENOMIC DNA]</scope>
    <source>
        <strain>SAFR-032</strain>
    </source>
</reference>
<accession>A8FH17</accession>
<evidence type="ECO:0000255" key="1">
    <source>
        <dbReference type="HAMAP-Rule" id="MF_01542"/>
    </source>
</evidence>
<feature type="chain" id="PRO_1000068785" description="UPF0349 protein BPUM_2879">
    <location>
        <begin position="1"/>
        <end position="78"/>
    </location>
</feature>
<organism>
    <name type="scientific">Bacillus pumilus (strain SAFR-032)</name>
    <dbReference type="NCBI Taxonomy" id="315750"/>
    <lineage>
        <taxon>Bacteria</taxon>
        <taxon>Bacillati</taxon>
        <taxon>Bacillota</taxon>
        <taxon>Bacilli</taxon>
        <taxon>Bacillales</taxon>
        <taxon>Bacillaceae</taxon>
        <taxon>Bacillus</taxon>
    </lineage>
</organism>
<protein>
    <recommendedName>
        <fullName evidence="1">UPF0349 protein BPUM_2879</fullName>
    </recommendedName>
</protein>
<sequence>MFPLIEFCVSNLAQGSQEAKEKLDKDPNLDVMEYGCLSYCGKCMDSPFALVNGEFVSGENAEQLVERIYAFIEENEMF</sequence>
<name>Y2879_BACP2</name>